<sequence length="538" mass="57597">MGVVAKNFPIPDLHRVRRVLLSVSDKTGIVAFAQALQTYNVELISTGGTAKVLMAAGLPVRDVAEVTGFPEIMDGRVKTLHPLIHGALLGVREDPSHAVAMEQYGIHGIDLLVVNLYPFEETVQSGADGQTILENIDIGGPAMIRAAAKNHVYTGVITAVSDYDAVLSELKQHDGCLSFSMRQQLAMRAYAHTAAYDTAIAAWFAKNLKIETPSWQSFSGHLKNVMRYGENPHQKAAFYRNGDKRFGVATAKLLQGKALSYNNMNDTDAAFELVAEFDPQNTAAVALIKHANPCGVAEGQTLKEAYLKALLCDNVSAFGGIIALNQPLDAECAEEVIKIFTEVIIAPDATMEAREIISGKKNLRLLLTGGVPDPRCGGFIAKTLAGGILVQSRDNVVVDDLKLQVVTKRAPSQEEMRDLQFAFRVVKHVKSNAIVYAKNSATVGIGAGQMSRVDSAKIAARKAEESAKRAGLTESLTKGSVVASDAFFPFADGLLAVAEAGATAVIQPGGSMRDEEVIAAADAQGLAMVFTGVRHFRH</sequence>
<organism>
    <name type="scientific">Bartonella henselae (strain ATCC 49882 / DSM 28221 / CCUG 30454 / Houston 1)</name>
    <name type="common">Rochalimaea henselae</name>
    <dbReference type="NCBI Taxonomy" id="283166"/>
    <lineage>
        <taxon>Bacteria</taxon>
        <taxon>Pseudomonadati</taxon>
        <taxon>Pseudomonadota</taxon>
        <taxon>Alphaproteobacteria</taxon>
        <taxon>Hyphomicrobiales</taxon>
        <taxon>Bartonellaceae</taxon>
        <taxon>Bartonella</taxon>
    </lineage>
</organism>
<accession>Q6G5S5</accession>
<dbReference type="EC" id="2.1.2.3" evidence="1"/>
<dbReference type="EC" id="3.5.4.10" evidence="1"/>
<dbReference type="EMBL" id="BX897699">
    <property type="protein sequence ID" value="CAF28360.1"/>
    <property type="molecule type" value="Genomic_DNA"/>
</dbReference>
<dbReference type="RefSeq" id="WP_011181360.1">
    <property type="nucleotide sequence ID" value="NZ_LRIJ02000001.1"/>
</dbReference>
<dbReference type="SMR" id="Q6G5S5"/>
<dbReference type="PaxDb" id="283166-BH15970"/>
<dbReference type="EnsemblBacteria" id="CAF28360">
    <property type="protein sequence ID" value="CAF28360"/>
    <property type="gene ID" value="BH15970"/>
</dbReference>
<dbReference type="GeneID" id="92986216"/>
<dbReference type="KEGG" id="bhe:BH15970"/>
<dbReference type="eggNOG" id="COG0138">
    <property type="taxonomic scope" value="Bacteria"/>
</dbReference>
<dbReference type="OrthoDB" id="9802065at2"/>
<dbReference type="UniPathway" id="UPA00074">
    <property type="reaction ID" value="UER00133"/>
</dbReference>
<dbReference type="UniPathway" id="UPA00074">
    <property type="reaction ID" value="UER00135"/>
</dbReference>
<dbReference type="Proteomes" id="UP000000421">
    <property type="component" value="Chromosome"/>
</dbReference>
<dbReference type="GO" id="GO:0005829">
    <property type="term" value="C:cytosol"/>
    <property type="evidence" value="ECO:0007669"/>
    <property type="project" value="TreeGrafter"/>
</dbReference>
<dbReference type="GO" id="GO:0003937">
    <property type="term" value="F:IMP cyclohydrolase activity"/>
    <property type="evidence" value="ECO:0007669"/>
    <property type="project" value="UniProtKB-UniRule"/>
</dbReference>
<dbReference type="GO" id="GO:0004643">
    <property type="term" value="F:phosphoribosylaminoimidazolecarboxamide formyltransferase activity"/>
    <property type="evidence" value="ECO:0007669"/>
    <property type="project" value="UniProtKB-UniRule"/>
</dbReference>
<dbReference type="GO" id="GO:0006189">
    <property type="term" value="P:'de novo' IMP biosynthetic process"/>
    <property type="evidence" value="ECO:0007669"/>
    <property type="project" value="UniProtKB-UniRule"/>
</dbReference>
<dbReference type="CDD" id="cd01421">
    <property type="entry name" value="IMPCH"/>
    <property type="match status" value="1"/>
</dbReference>
<dbReference type="FunFam" id="3.40.140.20:FF:000001">
    <property type="entry name" value="Bifunctional purine biosynthesis protein PurH"/>
    <property type="match status" value="1"/>
</dbReference>
<dbReference type="FunFam" id="3.40.50.1380:FF:000001">
    <property type="entry name" value="Bifunctional purine biosynthesis protein PurH"/>
    <property type="match status" value="1"/>
</dbReference>
<dbReference type="Gene3D" id="3.40.140.20">
    <property type="match status" value="2"/>
</dbReference>
<dbReference type="Gene3D" id="3.40.50.1380">
    <property type="entry name" value="Methylglyoxal synthase-like domain"/>
    <property type="match status" value="1"/>
</dbReference>
<dbReference type="HAMAP" id="MF_00139">
    <property type="entry name" value="PurH"/>
    <property type="match status" value="1"/>
</dbReference>
<dbReference type="InterPro" id="IPR024051">
    <property type="entry name" value="AICAR_Tfase_dup_dom_sf"/>
</dbReference>
<dbReference type="InterPro" id="IPR016193">
    <property type="entry name" value="Cytidine_deaminase-like"/>
</dbReference>
<dbReference type="InterPro" id="IPR011607">
    <property type="entry name" value="MGS-like_dom"/>
</dbReference>
<dbReference type="InterPro" id="IPR036914">
    <property type="entry name" value="MGS-like_dom_sf"/>
</dbReference>
<dbReference type="InterPro" id="IPR002695">
    <property type="entry name" value="PurH-like"/>
</dbReference>
<dbReference type="NCBIfam" id="NF002049">
    <property type="entry name" value="PRK00881.1"/>
    <property type="match status" value="1"/>
</dbReference>
<dbReference type="NCBIfam" id="TIGR00355">
    <property type="entry name" value="purH"/>
    <property type="match status" value="1"/>
</dbReference>
<dbReference type="PANTHER" id="PTHR11692:SF0">
    <property type="entry name" value="BIFUNCTIONAL PURINE BIOSYNTHESIS PROTEIN ATIC"/>
    <property type="match status" value="1"/>
</dbReference>
<dbReference type="PANTHER" id="PTHR11692">
    <property type="entry name" value="BIFUNCTIONAL PURINE BIOSYNTHESIS PROTEIN PURH"/>
    <property type="match status" value="1"/>
</dbReference>
<dbReference type="Pfam" id="PF01808">
    <property type="entry name" value="AICARFT_IMPCHas"/>
    <property type="match status" value="1"/>
</dbReference>
<dbReference type="Pfam" id="PF02142">
    <property type="entry name" value="MGS"/>
    <property type="match status" value="1"/>
</dbReference>
<dbReference type="PIRSF" id="PIRSF000414">
    <property type="entry name" value="AICARFT_IMPCHas"/>
    <property type="match status" value="1"/>
</dbReference>
<dbReference type="SMART" id="SM00798">
    <property type="entry name" value="AICARFT_IMPCHas"/>
    <property type="match status" value="1"/>
</dbReference>
<dbReference type="SMART" id="SM00851">
    <property type="entry name" value="MGS"/>
    <property type="match status" value="1"/>
</dbReference>
<dbReference type="SUPFAM" id="SSF53927">
    <property type="entry name" value="Cytidine deaminase-like"/>
    <property type="match status" value="1"/>
</dbReference>
<dbReference type="SUPFAM" id="SSF52335">
    <property type="entry name" value="Methylglyoxal synthase-like"/>
    <property type="match status" value="1"/>
</dbReference>
<dbReference type="PROSITE" id="PS51855">
    <property type="entry name" value="MGS"/>
    <property type="match status" value="1"/>
</dbReference>
<reference key="1">
    <citation type="journal article" date="2004" name="Proc. Natl. Acad. Sci. U.S.A.">
        <title>The louse-borne human pathogen Bartonella quintana is a genomic derivative of the zoonotic agent Bartonella henselae.</title>
        <authorList>
            <person name="Alsmark U.C.M."/>
            <person name="Frank A.C."/>
            <person name="Karlberg E.O."/>
            <person name="Legault B.-A."/>
            <person name="Ardell D.H."/>
            <person name="Canbaeck B."/>
            <person name="Eriksson A.-S."/>
            <person name="Naeslund A.K."/>
            <person name="Handley S.A."/>
            <person name="Huvet M."/>
            <person name="La Scola B."/>
            <person name="Holmberg M."/>
            <person name="Andersson S.G.E."/>
        </authorList>
    </citation>
    <scope>NUCLEOTIDE SEQUENCE [LARGE SCALE GENOMIC DNA]</scope>
    <source>
        <strain>ATCC 49882 / DSM 28221 / CCUG 30454 / Houston 1</strain>
    </source>
</reference>
<evidence type="ECO:0000255" key="1">
    <source>
        <dbReference type="HAMAP-Rule" id="MF_00139"/>
    </source>
</evidence>
<evidence type="ECO:0000255" key="2">
    <source>
        <dbReference type="PROSITE-ProRule" id="PRU01202"/>
    </source>
</evidence>
<gene>
    <name evidence="1" type="primary">purH</name>
    <name type="ordered locus">BH15970</name>
</gene>
<proteinExistence type="inferred from homology"/>
<name>PUR9_BARHE</name>
<protein>
    <recommendedName>
        <fullName evidence="1">Bifunctional purine biosynthesis protein PurH</fullName>
    </recommendedName>
    <domain>
        <recommendedName>
            <fullName evidence="1">Phosphoribosylaminoimidazolecarboxamide formyltransferase</fullName>
            <ecNumber evidence="1">2.1.2.3</ecNumber>
        </recommendedName>
        <alternativeName>
            <fullName evidence="1">AICAR transformylase</fullName>
        </alternativeName>
    </domain>
    <domain>
        <recommendedName>
            <fullName evidence="1">IMP cyclohydrolase</fullName>
            <ecNumber evidence="1">3.5.4.10</ecNumber>
        </recommendedName>
        <alternativeName>
            <fullName evidence="1">ATIC</fullName>
        </alternativeName>
        <alternativeName>
            <fullName evidence="1">IMP synthase</fullName>
        </alternativeName>
        <alternativeName>
            <fullName evidence="1">Inosinicase</fullName>
        </alternativeName>
    </domain>
</protein>
<feature type="chain" id="PRO_1000018845" description="Bifunctional purine biosynthesis protein PurH">
    <location>
        <begin position="1"/>
        <end position="538"/>
    </location>
</feature>
<feature type="domain" description="MGS-like" evidence="2">
    <location>
        <begin position="8"/>
        <end position="158"/>
    </location>
</feature>
<comment type="catalytic activity">
    <reaction evidence="1">
        <text>(6R)-10-formyltetrahydrofolate + 5-amino-1-(5-phospho-beta-D-ribosyl)imidazole-4-carboxamide = 5-formamido-1-(5-phospho-D-ribosyl)imidazole-4-carboxamide + (6S)-5,6,7,8-tetrahydrofolate</text>
        <dbReference type="Rhea" id="RHEA:22192"/>
        <dbReference type="ChEBI" id="CHEBI:57453"/>
        <dbReference type="ChEBI" id="CHEBI:58467"/>
        <dbReference type="ChEBI" id="CHEBI:58475"/>
        <dbReference type="ChEBI" id="CHEBI:195366"/>
        <dbReference type="EC" id="2.1.2.3"/>
    </reaction>
</comment>
<comment type="catalytic activity">
    <reaction evidence="1">
        <text>IMP + H2O = 5-formamido-1-(5-phospho-D-ribosyl)imidazole-4-carboxamide</text>
        <dbReference type="Rhea" id="RHEA:18445"/>
        <dbReference type="ChEBI" id="CHEBI:15377"/>
        <dbReference type="ChEBI" id="CHEBI:58053"/>
        <dbReference type="ChEBI" id="CHEBI:58467"/>
        <dbReference type="EC" id="3.5.4.10"/>
    </reaction>
</comment>
<comment type="pathway">
    <text evidence="1">Purine metabolism; IMP biosynthesis via de novo pathway; 5-formamido-1-(5-phospho-D-ribosyl)imidazole-4-carboxamide from 5-amino-1-(5-phospho-D-ribosyl)imidazole-4-carboxamide (10-formyl THF route): step 1/1.</text>
</comment>
<comment type="pathway">
    <text evidence="1">Purine metabolism; IMP biosynthesis via de novo pathway; IMP from 5-formamido-1-(5-phospho-D-ribosyl)imidazole-4-carboxamide: step 1/1.</text>
</comment>
<comment type="domain">
    <text evidence="1">The IMP cyclohydrolase activity resides in the N-terminal region.</text>
</comment>
<comment type="similarity">
    <text evidence="1">Belongs to the PurH family.</text>
</comment>
<keyword id="KW-0378">Hydrolase</keyword>
<keyword id="KW-0511">Multifunctional enzyme</keyword>
<keyword id="KW-0658">Purine biosynthesis</keyword>
<keyword id="KW-0808">Transferase</keyword>